<name>ZNUC_YERPA</name>
<organism>
    <name type="scientific">Yersinia pestis bv. Antiqua (strain Antiqua)</name>
    <dbReference type="NCBI Taxonomy" id="360102"/>
    <lineage>
        <taxon>Bacteria</taxon>
        <taxon>Pseudomonadati</taxon>
        <taxon>Pseudomonadota</taxon>
        <taxon>Gammaproteobacteria</taxon>
        <taxon>Enterobacterales</taxon>
        <taxon>Yersiniaceae</taxon>
        <taxon>Yersinia</taxon>
    </lineage>
</organism>
<gene>
    <name evidence="1" type="primary">znuC</name>
    <name type="ordered locus">YPA_1443</name>
</gene>
<accession>Q1C812</accession>
<keyword id="KW-0067">ATP-binding</keyword>
<keyword id="KW-0997">Cell inner membrane</keyword>
<keyword id="KW-1003">Cell membrane</keyword>
<keyword id="KW-0406">Ion transport</keyword>
<keyword id="KW-0472">Membrane</keyword>
<keyword id="KW-0547">Nucleotide-binding</keyword>
<keyword id="KW-1278">Translocase</keyword>
<keyword id="KW-0813">Transport</keyword>
<keyword id="KW-0862">Zinc</keyword>
<keyword id="KW-0864">Zinc transport</keyword>
<protein>
    <recommendedName>
        <fullName evidence="1">Zinc import ATP-binding protein ZnuC</fullName>
        <ecNumber evidence="1">7.2.2.20</ecNumber>
    </recommendedName>
</protein>
<dbReference type="EC" id="7.2.2.20" evidence="1"/>
<dbReference type="EMBL" id="CP000308">
    <property type="protein sequence ID" value="ABG13410.1"/>
    <property type="molecule type" value="Genomic_DNA"/>
</dbReference>
<dbReference type="SMR" id="Q1C812"/>
<dbReference type="KEGG" id="ypa:YPA_1443"/>
<dbReference type="Proteomes" id="UP000001971">
    <property type="component" value="Chromosome"/>
</dbReference>
<dbReference type="GO" id="GO:0005886">
    <property type="term" value="C:plasma membrane"/>
    <property type="evidence" value="ECO:0007669"/>
    <property type="project" value="UniProtKB-SubCell"/>
</dbReference>
<dbReference type="GO" id="GO:0015633">
    <property type="term" value="F:ABC-type zinc transporter activity"/>
    <property type="evidence" value="ECO:0007669"/>
    <property type="project" value="UniProtKB-EC"/>
</dbReference>
<dbReference type="GO" id="GO:0005524">
    <property type="term" value="F:ATP binding"/>
    <property type="evidence" value="ECO:0007669"/>
    <property type="project" value="UniProtKB-KW"/>
</dbReference>
<dbReference type="GO" id="GO:0016887">
    <property type="term" value="F:ATP hydrolysis activity"/>
    <property type="evidence" value="ECO:0007669"/>
    <property type="project" value="InterPro"/>
</dbReference>
<dbReference type="GO" id="GO:0010043">
    <property type="term" value="P:response to zinc ion"/>
    <property type="evidence" value="ECO:0007669"/>
    <property type="project" value="TreeGrafter"/>
</dbReference>
<dbReference type="CDD" id="cd03235">
    <property type="entry name" value="ABC_Metallic_Cations"/>
    <property type="match status" value="1"/>
</dbReference>
<dbReference type="FunFam" id="3.40.50.300:FF:000392">
    <property type="entry name" value="Zinc import ATP-binding protein ZnuC"/>
    <property type="match status" value="1"/>
</dbReference>
<dbReference type="Gene3D" id="3.40.50.300">
    <property type="entry name" value="P-loop containing nucleotide triphosphate hydrolases"/>
    <property type="match status" value="1"/>
</dbReference>
<dbReference type="InterPro" id="IPR003593">
    <property type="entry name" value="AAA+_ATPase"/>
</dbReference>
<dbReference type="InterPro" id="IPR003439">
    <property type="entry name" value="ABC_transporter-like_ATP-bd"/>
</dbReference>
<dbReference type="InterPro" id="IPR050153">
    <property type="entry name" value="Metal_Ion_Import_ABC"/>
</dbReference>
<dbReference type="InterPro" id="IPR027417">
    <property type="entry name" value="P-loop_NTPase"/>
</dbReference>
<dbReference type="NCBIfam" id="NF007090">
    <property type="entry name" value="PRK09544.1"/>
    <property type="match status" value="1"/>
</dbReference>
<dbReference type="PANTHER" id="PTHR42734">
    <property type="entry name" value="METAL TRANSPORT SYSTEM ATP-BINDING PROTEIN TM_0124-RELATED"/>
    <property type="match status" value="1"/>
</dbReference>
<dbReference type="PANTHER" id="PTHR42734:SF9">
    <property type="entry name" value="ZINC IMPORT ATP-BINDING PROTEIN ZNUC"/>
    <property type="match status" value="1"/>
</dbReference>
<dbReference type="Pfam" id="PF00005">
    <property type="entry name" value="ABC_tran"/>
    <property type="match status" value="1"/>
</dbReference>
<dbReference type="SMART" id="SM00382">
    <property type="entry name" value="AAA"/>
    <property type="match status" value="1"/>
</dbReference>
<dbReference type="SUPFAM" id="SSF52540">
    <property type="entry name" value="P-loop containing nucleoside triphosphate hydrolases"/>
    <property type="match status" value="1"/>
</dbReference>
<dbReference type="PROSITE" id="PS50893">
    <property type="entry name" value="ABC_TRANSPORTER_2"/>
    <property type="match status" value="1"/>
</dbReference>
<dbReference type="PROSITE" id="PS51298">
    <property type="entry name" value="ZNUC"/>
    <property type="match status" value="1"/>
</dbReference>
<reference key="1">
    <citation type="journal article" date="2006" name="J. Bacteriol.">
        <title>Complete genome sequence of Yersinia pestis strains Antiqua and Nepal516: evidence of gene reduction in an emerging pathogen.</title>
        <authorList>
            <person name="Chain P.S.G."/>
            <person name="Hu P."/>
            <person name="Malfatti S.A."/>
            <person name="Radnedge L."/>
            <person name="Larimer F."/>
            <person name="Vergez L.M."/>
            <person name="Worsham P."/>
            <person name="Chu M.C."/>
            <person name="Andersen G.L."/>
        </authorList>
    </citation>
    <scope>NUCLEOTIDE SEQUENCE [LARGE SCALE GENOMIC DNA]</scope>
    <source>
        <strain>Antiqua</strain>
    </source>
</reference>
<feature type="chain" id="PRO_0000281570" description="Zinc import ATP-binding protein ZnuC">
    <location>
        <begin position="1"/>
        <end position="253"/>
    </location>
</feature>
<feature type="domain" description="ABC transporter" evidence="1">
    <location>
        <begin position="6"/>
        <end position="227"/>
    </location>
</feature>
<feature type="binding site" evidence="1">
    <location>
        <begin position="38"/>
        <end position="45"/>
    </location>
    <ligand>
        <name>ATP</name>
        <dbReference type="ChEBI" id="CHEBI:30616"/>
    </ligand>
</feature>
<proteinExistence type="inferred from homology"/>
<comment type="function">
    <text evidence="1">Part of the ABC transporter complex ZnuABC involved in zinc import. Responsible for energy coupling to the transport system.</text>
</comment>
<comment type="catalytic activity">
    <reaction evidence="1">
        <text>Zn(2+)(out) + ATP(in) + H2O(in) = Zn(2+)(in) + ADP(in) + phosphate(in) + H(+)(in)</text>
        <dbReference type="Rhea" id="RHEA:29795"/>
        <dbReference type="ChEBI" id="CHEBI:15377"/>
        <dbReference type="ChEBI" id="CHEBI:15378"/>
        <dbReference type="ChEBI" id="CHEBI:29105"/>
        <dbReference type="ChEBI" id="CHEBI:30616"/>
        <dbReference type="ChEBI" id="CHEBI:43474"/>
        <dbReference type="ChEBI" id="CHEBI:456216"/>
        <dbReference type="EC" id="7.2.2.20"/>
    </reaction>
</comment>
<comment type="subunit">
    <text evidence="1">The complex is composed of two ATP-binding proteins (ZnuC), two transmembrane proteins (ZnuB) and a solute-binding protein (ZnuA).</text>
</comment>
<comment type="subcellular location">
    <subcellularLocation>
        <location evidence="1">Cell inner membrane</location>
        <topology evidence="1">Peripheral membrane protein</topology>
    </subcellularLocation>
</comment>
<comment type="similarity">
    <text evidence="1">Belongs to the ABC transporter superfamily. Zinc importer (TC 3.A.1.15.5) family.</text>
</comment>
<sequence>MMPILVTLNKISVTFGSRRVLNDISLSLRPGKILTLLGPNGAGKSTLVRVVLGLIPPSSGSLVREPGLRIGYVPQKLHLDATLPLTVSRFMRLKPGVKKADILPALTRVQAAHLLDQPMQKLSGGENQRVLLARALLNRPQLLVLDEPTQGVDVNGQLALYDLIEQLRKELGCAVLMVSHDLHLVMAKTDEVLCLNQHICCSGAPEVVSTHPEFIAMFGNRGAEQLAVYRHNHNHRHDLHGKIILKNSGSRGA</sequence>
<evidence type="ECO:0000255" key="1">
    <source>
        <dbReference type="HAMAP-Rule" id="MF_01725"/>
    </source>
</evidence>